<evidence type="ECO:0000250" key="1"/>
<evidence type="ECO:0000250" key="2">
    <source>
        <dbReference type="UniProtKB" id="Q9CR35"/>
    </source>
</evidence>
<evidence type="ECO:0000255" key="3">
    <source>
        <dbReference type="PROSITE-ProRule" id="PRU00274"/>
    </source>
</evidence>
<evidence type="ECO:0000255" key="4">
    <source>
        <dbReference type="PROSITE-ProRule" id="PRU10078"/>
    </source>
</evidence>
<evidence type="ECO:0000255" key="5">
    <source>
        <dbReference type="PROSITE-ProRule" id="PRU10079"/>
    </source>
</evidence>
<evidence type="ECO:0000305" key="6"/>
<evidence type="ECO:0000312" key="7">
    <source>
        <dbReference type="HGNC" id="HGNC:2521"/>
    </source>
</evidence>
<gene>
    <name evidence="7" type="primary">CTRB1</name>
    <name evidence="7" type="synonym">CTRB</name>
</gene>
<organism>
    <name type="scientific">Homo sapiens</name>
    <name type="common">Human</name>
    <dbReference type="NCBI Taxonomy" id="9606"/>
    <lineage>
        <taxon>Eukaryota</taxon>
        <taxon>Metazoa</taxon>
        <taxon>Chordata</taxon>
        <taxon>Craniata</taxon>
        <taxon>Vertebrata</taxon>
        <taxon>Euteleostomi</taxon>
        <taxon>Mammalia</taxon>
        <taxon>Eutheria</taxon>
        <taxon>Euarchontoglires</taxon>
        <taxon>Primates</taxon>
        <taxon>Haplorrhini</taxon>
        <taxon>Catarrhini</taxon>
        <taxon>Hominidae</taxon>
        <taxon>Homo</taxon>
    </lineage>
</organism>
<protein>
    <recommendedName>
        <fullName>Chymotrypsinogen B</fullName>
        <ecNumber>3.4.21.1</ecNumber>
    </recommendedName>
    <component>
        <recommendedName>
            <fullName>Chymotrypsin B chain A</fullName>
        </recommendedName>
    </component>
    <component>
        <recommendedName>
            <fullName>Chymotrypsin B chain B</fullName>
        </recommendedName>
    </component>
    <component>
        <recommendedName>
            <fullName>Chymotrypsin B chain C</fullName>
        </recommendedName>
    </component>
</protein>
<accession>P17538</accession>
<reference key="1">
    <citation type="journal article" date="1989" name="Biochem. Biophys. Res. Commun.">
        <title>Molecular cloning and nucleotide sequence of human pancreatic prechymotrypsinogen cDNA.</title>
        <authorList>
            <person name="Tomita N."/>
            <person name="Izumoto Y."/>
            <person name="Horii A."/>
            <person name="Doi S."/>
            <person name="Yokouchi H."/>
            <person name="Ogawa M."/>
            <person name="Mori T."/>
            <person name="Matsubara K."/>
        </authorList>
    </citation>
    <scope>NUCLEOTIDE SEQUENCE [MRNA]</scope>
    <source>
        <tissue>Pancreas</tissue>
    </source>
</reference>
<reference key="2">
    <citation type="submission" date="2004-10" db="EMBL/GenBank/DDBJ databases">
        <title>Cloning of human full-length CDSs in BD Creator(TM) system donor vector.</title>
        <authorList>
            <person name="Kalnine N."/>
            <person name="Chen X."/>
            <person name="Rolfs A."/>
            <person name="Halleck A."/>
            <person name="Hines L."/>
            <person name="Eisenstein S."/>
            <person name="Koundinya M."/>
            <person name="Raphael J."/>
            <person name="Moreira D."/>
            <person name="Kelley T."/>
            <person name="LaBaer J."/>
            <person name="Lin Y."/>
            <person name="Phelan M."/>
            <person name="Farmer A."/>
        </authorList>
    </citation>
    <scope>NUCLEOTIDE SEQUENCE [LARGE SCALE MRNA]</scope>
</reference>
<reference key="3">
    <citation type="journal article" date="2004" name="Nature">
        <title>The sequence and analysis of duplication-rich human chromosome 16.</title>
        <authorList>
            <person name="Martin J."/>
            <person name="Han C."/>
            <person name="Gordon L.A."/>
            <person name="Terry A."/>
            <person name="Prabhakar S."/>
            <person name="She X."/>
            <person name="Xie G."/>
            <person name="Hellsten U."/>
            <person name="Chan Y.M."/>
            <person name="Altherr M."/>
            <person name="Couronne O."/>
            <person name="Aerts A."/>
            <person name="Bajorek E."/>
            <person name="Black S."/>
            <person name="Blumer H."/>
            <person name="Branscomb E."/>
            <person name="Brown N.C."/>
            <person name="Bruno W.J."/>
            <person name="Buckingham J.M."/>
            <person name="Callen D.F."/>
            <person name="Campbell C.S."/>
            <person name="Campbell M.L."/>
            <person name="Campbell E.W."/>
            <person name="Caoile C."/>
            <person name="Challacombe J.F."/>
            <person name="Chasteen L.A."/>
            <person name="Chertkov O."/>
            <person name="Chi H.C."/>
            <person name="Christensen M."/>
            <person name="Clark L.M."/>
            <person name="Cohn J.D."/>
            <person name="Denys M."/>
            <person name="Detter J.C."/>
            <person name="Dickson M."/>
            <person name="Dimitrijevic-Bussod M."/>
            <person name="Escobar J."/>
            <person name="Fawcett J.J."/>
            <person name="Flowers D."/>
            <person name="Fotopulos D."/>
            <person name="Glavina T."/>
            <person name="Gomez M."/>
            <person name="Gonzales E."/>
            <person name="Goodstein D."/>
            <person name="Goodwin L.A."/>
            <person name="Grady D.L."/>
            <person name="Grigoriev I."/>
            <person name="Groza M."/>
            <person name="Hammon N."/>
            <person name="Hawkins T."/>
            <person name="Haydu L."/>
            <person name="Hildebrand C.E."/>
            <person name="Huang W."/>
            <person name="Israni S."/>
            <person name="Jett J."/>
            <person name="Jewett P.B."/>
            <person name="Kadner K."/>
            <person name="Kimball H."/>
            <person name="Kobayashi A."/>
            <person name="Krawczyk M.-C."/>
            <person name="Leyba T."/>
            <person name="Longmire J.L."/>
            <person name="Lopez F."/>
            <person name="Lou Y."/>
            <person name="Lowry S."/>
            <person name="Ludeman T."/>
            <person name="Manohar C.F."/>
            <person name="Mark G.A."/>
            <person name="McMurray K.L."/>
            <person name="Meincke L.J."/>
            <person name="Morgan J."/>
            <person name="Moyzis R.K."/>
            <person name="Mundt M.O."/>
            <person name="Munk A.C."/>
            <person name="Nandkeshwar R.D."/>
            <person name="Pitluck S."/>
            <person name="Pollard M."/>
            <person name="Predki P."/>
            <person name="Parson-Quintana B."/>
            <person name="Ramirez L."/>
            <person name="Rash S."/>
            <person name="Retterer J."/>
            <person name="Ricke D.O."/>
            <person name="Robinson D.L."/>
            <person name="Rodriguez A."/>
            <person name="Salamov A."/>
            <person name="Saunders E.H."/>
            <person name="Scott D."/>
            <person name="Shough T."/>
            <person name="Stallings R.L."/>
            <person name="Stalvey M."/>
            <person name="Sutherland R.D."/>
            <person name="Tapia R."/>
            <person name="Tesmer J.G."/>
            <person name="Thayer N."/>
            <person name="Thompson L.S."/>
            <person name="Tice H."/>
            <person name="Torney D.C."/>
            <person name="Tran-Gyamfi M."/>
            <person name="Tsai M."/>
            <person name="Ulanovsky L.E."/>
            <person name="Ustaszewska A."/>
            <person name="Vo N."/>
            <person name="White P.S."/>
            <person name="Williams A.L."/>
            <person name="Wills P.L."/>
            <person name="Wu J.-R."/>
            <person name="Wu K."/>
            <person name="Yang J."/>
            <person name="DeJong P."/>
            <person name="Bruce D."/>
            <person name="Doggett N.A."/>
            <person name="Deaven L."/>
            <person name="Schmutz J."/>
            <person name="Grimwood J."/>
            <person name="Richardson P."/>
            <person name="Rokhsar D.S."/>
            <person name="Eichler E.E."/>
            <person name="Gilna P."/>
            <person name="Lucas S.M."/>
            <person name="Myers R.M."/>
            <person name="Rubin E.M."/>
            <person name="Pennacchio L.A."/>
        </authorList>
    </citation>
    <scope>NUCLEOTIDE SEQUENCE [LARGE SCALE GENOMIC DNA]</scope>
</reference>
<reference key="4">
    <citation type="journal article" date="2004" name="Genome Res.">
        <title>The status, quality, and expansion of the NIH full-length cDNA project: the Mammalian Gene Collection (MGC).</title>
        <authorList>
            <consortium name="The MGC Project Team"/>
        </authorList>
    </citation>
    <scope>NUCLEOTIDE SEQUENCE [LARGE SCALE MRNA]</scope>
    <source>
        <tissue>Pancreas</tissue>
    </source>
</reference>
<name>CTRB1_HUMAN</name>
<dbReference type="EC" id="3.4.21.1"/>
<dbReference type="EMBL" id="M24400">
    <property type="protein sequence ID" value="AAA52128.1"/>
    <property type="molecule type" value="mRNA"/>
</dbReference>
<dbReference type="EMBL" id="BT007356">
    <property type="protein sequence ID" value="AAP36020.1"/>
    <property type="molecule type" value="mRNA"/>
</dbReference>
<dbReference type="EMBL" id="AC009078">
    <property type="status" value="NOT_ANNOTATED_CDS"/>
    <property type="molecule type" value="Genomic_DNA"/>
</dbReference>
<dbReference type="EMBL" id="BC005385">
    <property type="protein sequence ID" value="AAH05385.1"/>
    <property type="molecule type" value="mRNA"/>
</dbReference>
<dbReference type="CCDS" id="CCDS32490.1"/>
<dbReference type="PIR" id="A31299">
    <property type="entry name" value="A31299"/>
</dbReference>
<dbReference type="RefSeq" id="NP_001316119.1">
    <property type="nucleotide sequence ID" value="NM_001329190.1"/>
</dbReference>
<dbReference type="RefSeq" id="NP_001897.4">
    <property type="nucleotide sequence ID" value="NM_001906.6"/>
</dbReference>
<dbReference type="SMR" id="P17538"/>
<dbReference type="FunCoup" id="P17538">
    <property type="interactions" value="254"/>
</dbReference>
<dbReference type="IntAct" id="P17538">
    <property type="interactions" value="2"/>
</dbReference>
<dbReference type="STRING" id="9606.ENSP00000354294"/>
<dbReference type="BindingDB" id="P17538"/>
<dbReference type="ChEMBL" id="CHEMBL4796"/>
<dbReference type="DrugBank" id="DB07899">
    <property type="generic name" value="(2S) N-acetyl-L-alanyl-AlphaL-phenylalanyl-chloroethylketone"/>
</dbReference>
<dbReference type="DrugBank" id="DB08119">
    <property type="generic name" value="1,1,1-TRIFLUORO-3-((N-ACETYL)-L-LEUCYLAMIDO)-4-PHENYL-BUTAN-2-ONE(N-ACETYL-L-LEUCYL-L-PHENYLALANYL TRIFLUOROMETHYL KETONE)"/>
</dbReference>
<dbReference type="DrugBank" id="DB07380">
    <property type="generic name" value="1,1,1-TRIFLUORO-3-ACETAMIDO-4-PHENYL BUTAN-2-ONE(N-ACETYL-L-PHENYLALANYL TRIFLUOROMETHYL KETONE)"/>
</dbReference>
<dbReference type="DrugBank" id="DB01704">
    <property type="generic name" value="2,4-Dihydroxy-Trans Cinnamic Acid"/>
</dbReference>
<dbReference type="DrugBank" id="DB07749">
    <property type="generic name" value="2-ACETYLAMINO-4-METHYL-PENTANOIC ACID (1-FORMYL-2-PHENYL-ETHYL)-AMIDE"/>
</dbReference>
<dbReference type="DrugBank" id="DB07668">
    <property type="generic name" value="alpha-Methyl-2-hydroxy-4-diethylaminocinnamic acid"/>
</dbReference>
<dbReference type="DrugBank" id="DB06692">
    <property type="generic name" value="Aprotinin"/>
</dbReference>
<dbReference type="DrugBank" id="DB08692">
    <property type="generic name" value="D-1-(4-chlorophenyl)-2-(acetamido)ethane boronic acid"/>
</dbReference>
<dbReference type="DrugBank" id="DB08566">
    <property type="generic name" value="D-1-naphthyl-2-acetamido-ethane boronic acid"/>
</dbReference>
<dbReference type="DrugBank" id="DB08693">
    <property type="generic name" value="L-1-(4-chlorophenyl)-2-(acetamido)ethane boronic acid"/>
</dbReference>
<dbReference type="DrugBank" id="DB08565">
    <property type="generic name" value="L-1-naphthyl-2-acetamido-ethane boronic acid"/>
</dbReference>
<dbReference type="DrugBank" id="DB07383">
    <property type="generic name" value="N-(1-BENZYL-3,3,3-TRIFLUORO-2,2-DIHYDROXY-PROPYL)-ACETAMIDE"/>
</dbReference>
<dbReference type="DrugBank" id="DB08374">
    <property type="generic name" value="Phenylalanylmethylchloride"/>
</dbReference>
<dbReference type="DrugBank" id="DB01963">
    <property type="generic name" value="Phenylethane Boronic Acid"/>
</dbReference>
<dbReference type="DrugBank" id="DB03976">
    <property type="generic name" value="Phosphorylisopropane"/>
</dbReference>
<dbReference type="DrugBank" id="DB01662">
    <property type="generic name" value="Trans-O-Hydroxy-Alpha-Methyl Cinnamate"/>
</dbReference>
<dbReference type="DrugCentral" id="P17538"/>
<dbReference type="GuidetoPHARMACOLOGY" id="3272"/>
<dbReference type="MEROPS" id="S01.152"/>
<dbReference type="iPTMnet" id="P17538"/>
<dbReference type="PhosphoSitePlus" id="P17538"/>
<dbReference type="BioMuta" id="CTRB1"/>
<dbReference type="DMDM" id="117617"/>
<dbReference type="MassIVE" id="P17538"/>
<dbReference type="PaxDb" id="9606-ENSP00000354294"/>
<dbReference type="PeptideAtlas" id="P17538"/>
<dbReference type="Antibodypedia" id="30302">
    <property type="antibodies" value="205 antibodies from 20 providers"/>
</dbReference>
<dbReference type="DNASU" id="1504"/>
<dbReference type="Ensembl" id="ENST00000361017.9">
    <property type="protein sequence ID" value="ENSP00000354294.4"/>
    <property type="gene ID" value="ENSG00000168925.12"/>
</dbReference>
<dbReference type="GeneID" id="1504"/>
<dbReference type="KEGG" id="hsa:1504"/>
<dbReference type="MANE-Select" id="ENST00000361017.9">
    <property type="protein sequence ID" value="ENSP00000354294.4"/>
    <property type="RefSeq nucleotide sequence ID" value="NM_001906.6"/>
    <property type="RefSeq protein sequence ID" value="NP_001897.4"/>
</dbReference>
<dbReference type="UCSC" id="uc002fds.4">
    <property type="organism name" value="human"/>
</dbReference>
<dbReference type="AGR" id="HGNC:2521"/>
<dbReference type="CTD" id="1504"/>
<dbReference type="DisGeNET" id="1504"/>
<dbReference type="GeneCards" id="CTRB1"/>
<dbReference type="HGNC" id="HGNC:2521">
    <property type="gene designation" value="CTRB1"/>
</dbReference>
<dbReference type="HPA" id="ENSG00000168925">
    <property type="expression patterns" value="Tissue enriched (pancreas)"/>
</dbReference>
<dbReference type="MIM" id="118890">
    <property type="type" value="gene"/>
</dbReference>
<dbReference type="neXtProt" id="NX_P17538"/>
<dbReference type="OpenTargets" id="ENSG00000168925"/>
<dbReference type="VEuPathDB" id="HostDB:ENSG00000168925"/>
<dbReference type="eggNOG" id="KOG3627">
    <property type="taxonomic scope" value="Eukaryota"/>
</dbReference>
<dbReference type="GeneTree" id="ENSGT00940000153216"/>
<dbReference type="HOGENOM" id="CLU_006842_7_6_1"/>
<dbReference type="InParanoid" id="P17538"/>
<dbReference type="OMA" id="ITEMICA"/>
<dbReference type="OrthoDB" id="1307at9604"/>
<dbReference type="PAN-GO" id="P17538">
    <property type="GO annotations" value="2 GO annotations based on evolutionary models"/>
</dbReference>
<dbReference type="PhylomeDB" id="P17538"/>
<dbReference type="TreeFam" id="TF330455"/>
<dbReference type="PathwayCommons" id="P17538"/>
<dbReference type="Reactome" id="R-HSA-1592389">
    <property type="pathway name" value="Activation of Matrix Metalloproteinases"/>
</dbReference>
<dbReference type="Reactome" id="R-HSA-9758881">
    <property type="pathway name" value="Uptake of dietary cobalamins into enterocytes"/>
</dbReference>
<dbReference type="SignaLink" id="P17538"/>
<dbReference type="BioGRID-ORCS" id="1504">
    <property type="hits" value="13 hits in 771 CRISPR screens"/>
</dbReference>
<dbReference type="GenomeRNAi" id="1504"/>
<dbReference type="Pharos" id="P17538">
    <property type="development level" value="Tchem"/>
</dbReference>
<dbReference type="PRO" id="PR:P17538"/>
<dbReference type="Proteomes" id="UP000005640">
    <property type="component" value="Chromosome 16"/>
</dbReference>
<dbReference type="RNAct" id="P17538">
    <property type="molecule type" value="protein"/>
</dbReference>
<dbReference type="Bgee" id="ENSG00000168925">
    <property type="expression patterns" value="Expressed in body of pancreas and 85 other cell types or tissues"/>
</dbReference>
<dbReference type="ExpressionAtlas" id="P17538">
    <property type="expression patterns" value="baseline and differential"/>
</dbReference>
<dbReference type="GO" id="GO:0005576">
    <property type="term" value="C:extracellular region"/>
    <property type="evidence" value="ECO:0000304"/>
    <property type="project" value="Reactome"/>
</dbReference>
<dbReference type="GO" id="GO:0004252">
    <property type="term" value="F:serine-type endopeptidase activity"/>
    <property type="evidence" value="ECO:0000318"/>
    <property type="project" value="GO_Central"/>
</dbReference>
<dbReference type="GO" id="GO:0007586">
    <property type="term" value="P:digestion"/>
    <property type="evidence" value="ECO:0007669"/>
    <property type="project" value="UniProtKB-KW"/>
</dbReference>
<dbReference type="GO" id="GO:0006508">
    <property type="term" value="P:proteolysis"/>
    <property type="evidence" value="ECO:0000318"/>
    <property type="project" value="GO_Central"/>
</dbReference>
<dbReference type="CDD" id="cd00190">
    <property type="entry name" value="Tryp_SPc"/>
    <property type="match status" value="1"/>
</dbReference>
<dbReference type="FunFam" id="2.40.10.10:FF:000118">
    <property type="entry name" value="Chymotrypsinogen A"/>
    <property type="match status" value="1"/>
</dbReference>
<dbReference type="FunFam" id="2.40.10.10:FF:000176">
    <property type="entry name" value="Chymotrypsinogen A"/>
    <property type="match status" value="1"/>
</dbReference>
<dbReference type="Gene3D" id="2.40.10.10">
    <property type="entry name" value="Trypsin-like serine proteases"/>
    <property type="match status" value="1"/>
</dbReference>
<dbReference type="InterPro" id="IPR009003">
    <property type="entry name" value="Peptidase_S1_PA"/>
</dbReference>
<dbReference type="InterPro" id="IPR043504">
    <property type="entry name" value="Peptidase_S1_PA_chymotrypsin"/>
</dbReference>
<dbReference type="InterPro" id="IPR001314">
    <property type="entry name" value="Peptidase_S1A"/>
</dbReference>
<dbReference type="InterPro" id="IPR001254">
    <property type="entry name" value="Trypsin_dom"/>
</dbReference>
<dbReference type="InterPro" id="IPR018114">
    <property type="entry name" value="TRYPSIN_HIS"/>
</dbReference>
<dbReference type="InterPro" id="IPR033116">
    <property type="entry name" value="TRYPSIN_SER"/>
</dbReference>
<dbReference type="PANTHER" id="PTHR24250">
    <property type="entry name" value="CHYMOTRYPSIN-RELATED"/>
    <property type="match status" value="1"/>
</dbReference>
<dbReference type="PANTHER" id="PTHR24250:SF65">
    <property type="entry name" value="CHYMOTRYPSINOGEN B"/>
    <property type="match status" value="1"/>
</dbReference>
<dbReference type="Pfam" id="PF00089">
    <property type="entry name" value="Trypsin"/>
    <property type="match status" value="1"/>
</dbReference>
<dbReference type="PRINTS" id="PR00722">
    <property type="entry name" value="CHYMOTRYPSIN"/>
</dbReference>
<dbReference type="SMART" id="SM00020">
    <property type="entry name" value="Tryp_SPc"/>
    <property type="match status" value="1"/>
</dbReference>
<dbReference type="SUPFAM" id="SSF50494">
    <property type="entry name" value="Trypsin-like serine proteases"/>
    <property type="match status" value="1"/>
</dbReference>
<dbReference type="PROSITE" id="PS50240">
    <property type="entry name" value="TRYPSIN_DOM"/>
    <property type="match status" value="1"/>
</dbReference>
<dbReference type="PROSITE" id="PS00134">
    <property type="entry name" value="TRYPSIN_HIS"/>
    <property type="match status" value="1"/>
</dbReference>
<dbReference type="PROSITE" id="PS00135">
    <property type="entry name" value="TRYPSIN_SER"/>
    <property type="match status" value="1"/>
</dbReference>
<sequence>MASLWLLSCFSLVGAAFGCGVPAIHPVLSGLSRIVNGEDAVPGSWPWQVSLQDKTGFHFCGGSLISEDWVVTAAHCGVRTSDVVVAGEFDQGSDEENIQVLKIAKVFKNPKFSILTVNNDITLLKLATPARFSQTVSAVCLPSADDDFPAGTLCATTGWGKTKYNANKTPDKLQQAALPLLSNAECKKSWGRRITDVMICAGASGVSSCMGDSGGPLVCQKDGAWTLVGIVSWGSDTCSTSSPGVYARVTKLIPWVQKILAAN</sequence>
<comment type="catalytic activity">
    <reaction evidence="4 5">
        <text>Preferential cleavage: Tyr-|-Xaa, Trp-|-Xaa, Phe-|-Xaa, Leu-|-Xaa.</text>
        <dbReference type="EC" id="3.4.21.1"/>
    </reaction>
</comment>
<comment type="interaction">
    <interactant intactId="EBI-21852684">
        <id>P17538</id>
    </interactant>
    <interactant intactId="EBI-302355">
        <id>Q9UL42</id>
        <label>PNMA2</label>
    </interactant>
    <organismsDiffer>false</organismsDiffer>
    <experiments>2</experiments>
</comment>
<comment type="subcellular location">
    <subcellularLocation>
        <location>Secreted</location>
        <location>Extracellular space</location>
    </subcellularLocation>
</comment>
<comment type="similarity">
    <text evidence="3">Belongs to the peptidase S1 family.</text>
</comment>
<comment type="online information" name="Wikipedia">
    <link uri="https://en.wikipedia.org/wiki/Chymotrypsin"/>
    <text>Chymotrypsin entry</text>
</comment>
<keyword id="KW-0222">Digestion</keyword>
<keyword id="KW-1015">Disulfide bond</keyword>
<keyword id="KW-0378">Hydrolase</keyword>
<keyword id="KW-0597">Phosphoprotein</keyword>
<keyword id="KW-0645">Protease</keyword>
<keyword id="KW-1267">Proteomics identification</keyword>
<keyword id="KW-1185">Reference proteome</keyword>
<keyword id="KW-0964">Secreted</keyword>
<keyword id="KW-0720">Serine protease</keyword>
<keyword id="KW-0732">Signal</keyword>
<keyword id="KW-0865">Zymogen</keyword>
<feature type="signal peptide">
    <location>
        <begin position="1"/>
        <end position="18"/>
    </location>
</feature>
<feature type="chain" id="PRO_0000027638" description="Chymotrypsinogen B">
    <location>
        <begin position="19"/>
        <end position="263"/>
    </location>
</feature>
<feature type="chain" id="PRO_0000027639" description="Chymotrypsin B chain A">
    <location>
        <begin position="19"/>
        <end position="31"/>
    </location>
</feature>
<feature type="chain" id="PRO_0000027640" description="Chymotrypsin B chain B">
    <location>
        <begin position="34"/>
        <end position="164"/>
    </location>
</feature>
<feature type="chain" id="PRO_0000027641" description="Chymotrypsin B chain C">
    <location>
        <begin position="167"/>
        <end position="263"/>
    </location>
</feature>
<feature type="domain" description="Peptidase S1" evidence="3">
    <location>
        <begin position="34"/>
        <end position="261"/>
    </location>
</feature>
<feature type="active site" description="Charge relay system" evidence="1">
    <location>
        <position position="75"/>
    </location>
</feature>
<feature type="active site" description="Charge relay system" evidence="1">
    <location>
        <position position="120"/>
    </location>
</feature>
<feature type="active site" description="Charge relay system" evidence="1">
    <location>
        <position position="213"/>
    </location>
</feature>
<feature type="modified residue" description="Phosphoserine" evidence="2">
    <location>
        <position position="93"/>
    </location>
</feature>
<feature type="disulfide bond" evidence="3">
    <location>
        <begin position="19"/>
        <end position="140"/>
    </location>
</feature>
<feature type="disulfide bond" evidence="3">
    <location>
        <begin position="60"/>
        <end position="76"/>
    </location>
</feature>
<feature type="disulfide bond" evidence="3">
    <location>
        <begin position="154"/>
        <end position="219"/>
    </location>
</feature>
<feature type="disulfide bond" evidence="3">
    <location>
        <begin position="186"/>
        <end position="200"/>
    </location>
</feature>
<feature type="disulfide bond" evidence="3">
    <location>
        <begin position="209"/>
        <end position="238"/>
    </location>
</feature>
<feature type="sequence variant" id="VAR_057158" description="In dbSNP:rs8061550.">
    <original>D</original>
    <variation>H</variation>
    <location>
        <position position="222"/>
    </location>
</feature>
<feature type="sequence variant" id="VAR_014566" description="In dbSNP:rs4737.">
    <original>T</original>
    <variation>A</variation>
    <location>
        <position position="250"/>
    </location>
</feature>
<feature type="sequence conflict" description="In Ref. 1; AAA52128, 2; AAP36020 and 4; AAH05385." evidence="6" ref="1 2 4">
    <original>S</original>
    <variation>F</variation>
    <location>
        <position position="3"/>
    </location>
</feature>
<feature type="sequence conflict" description="In Ref. 1; AAA52128, 2; AAP36020 and 4; AAH05385." evidence="6" ref="1 2 4">
    <original>FSLVGAA</original>
    <variation>WALLGTT</variation>
    <location>
        <begin position="10"/>
        <end position="16"/>
    </location>
</feature>
<proteinExistence type="evidence at protein level"/>